<dbReference type="EMBL" id="LT708304">
    <property type="protein sequence ID" value="SIT98423.1"/>
    <property type="molecule type" value="Genomic_DNA"/>
</dbReference>
<dbReference type="RefSeq" id="NP_853724.1">
    <property type="nucleotide sequence ID" value="NC_002945.3"/>
</dbReference>
<dbReference type="RefSeq" id="WP_003400534.1">
    <property type="nucleotide sequence ID" value="NC_002945.4"/>
</dbReference>
<dbReference type="SMR" id="P0A611"/>
<dbReference type="KEGG" id="mbo:BQ2027_MB0055"/>
<dbReference type="PATRIC" id="fig|233413.5.peg.61"/>
<dbReference type="Proteomes" id="UP000001419">
    <property type="component" value="Chromosome"/>
</dbReference>
<dbReference type="GO" id="GO:0009295">
    <property type="term" value="C:nucleoid"/>
    <property type="evidence" value="ECO:0007669"/>
    <property type="project" value="TreeGrafter"/>
</dbReference>
<dbReference type="GO" id="GO:0003697">
    <property type="term" value="F:single-stranded DNA binding"/>
    <property type="evidence" value="ECO:0007669"/>
    <property type="project" value="UniProtKB-UniRule"/>
</dbReference>
<dbReference type="GO" id="GO:0006260">
    <property type="term" value="P:DNA replication"/>
    <property type="evidence" value="ECO:0007669"/>
    <property type="project" value="InterPro"/>
</dbReference>
<dbReference type="CDD" id="cd04496">
    <property type="entry name" value="SSB_OBF"/>
    <property type="match status" value="1"/>
</dbReference>
<dbReference type="FunFam" id="2.40.50.140:FF:000057">
    <property type="entry name" value="Single-stranded DNA-binding protein"/>
    <property type="match status" value="1"/>
</dbReference>
<dbReference type="Gene3D" id="2.40.50.140">
    <property type="entry name" value="Nucleic acid-binding proteins"/>
    <property type="match status" value="1"/>
</dbReference>
<dbReference type="HAMAP" id="MF_00984">
    <property type="entry name" value="SSB"/>
    <property type="match status" value="1"/>
</dbReference>
<dbReference type="InterPro" id="IPR012340">
    <property type="entry name" value="NA-bd_OB-fold"/>
</dbReference>
<dbReference type="InterPro" id="IPR000424">
    <property type="entry name" value="Primosome_PriB/ssb"/>
</dbReference>
<dbReference type="InterPro" id="IPR011344">
    <property type="entry name" value="ssDNA-bd"/>
</dbReference>
<dbReference type="NCBIfam" id="NF005851">
    <property type="entry name" value="PRK07772.1"/>
    <property type="match status" value="1"/>
</dbReference>
<dbReference type="NCBIfam" id="TIGR00621">
    <property type="entry name" value="ssb"/>
    <property type="match status" value="1"/>
</dbReference>
<dbReference type="PANTHER" id="PTHR10302">
    <property type="entry name" value="SINGLE-STRANDED DNA-BINDING PROTEIN"/>
    <property type="match status" value="1"/>
</dbReference>
<dbReference type="PANTHER" id="PTHR10302:SF27">
    <property type="entry name" value="SINGLE-STRANDED DNA-BINDING PROTEIN"/>
    <property type="match status" value="1"/>
</dbReference>
<dbReference type="Pfam" id="PF00436">
    <property type="entry name" value="SSB"/>
    <property type="match status" value="1"/>
</dbReference>
<dbReference type="SUPFAM" id="SSF50249">
    <property type="entry name" value="Nucleic acid-binding proteins"/>
    <property type="match status" value="1"/>
</dbReference>
<dbReference type="PROSITE" id="PS50935">
    <property type="entry name" value="SSB"/>
    <property type="match status" value="1"/>
</dbReference>
<proteinExistence type="inferred from homology"/>
<sequence>MAGDTTITIVGNLTADPELRFTPSGAAVANFTVASTPRIYDRQTGEWKDGEALFLRCNIWREAAENVAESLTRGARVIVSGRLKQRSFETREGEKRTVIEVEVDEIGPSLRYATAKVNKASRSGGFGSGSRPAPAQTSSASGDDPWGSAPASGSFGGGDDEPPF</sequence>
<evidence type="ECO:0000255" key="1">
    <source>
        <dbReference type="HAMAP-Rule" id="MF_00984"/>
    </source>
</evidence>
<evidence type="ECO:0000256" key="2">
    <source>
        <dbReference type="SAM" id="MobiDB-lite"/>
    </source>
</evidence>
<organism>
    <name type="scientific">Mycobacterium bovis (strain ATCC BAA-935 / AF2122/97)</name>
    <dbReference type="NCBI Taxonomy" id="233413"/>
    <lineage>
        <taxon>Bacteria</taxon>
        <taxon>Bacillati</taxon>
        <taxon>Actinomycetota</taxon>
        <taxon>Actinomycetes</taxon>
        <taxon>Mycobacteriales</taxon>
        <taxon>Mycobacteriaceae</taxon>
        <taxon>Mycobacterium</taxon>
        <taxon>Mycobacterium tuberculosis complex</taxon>
    </lineage>
</organism>
<reference key="1">
    <citation type="journal article" date="2003" name="Proc. Natl. Acad. Sci. U.S.A.">
        <title>The complete genome sequence of Mycobacterium bovis.</title>
        <authorList>
            <person name="Garnier T."/>
            <person name="Eiglmeier K."/>
            <person name="Camus J.-C."/>
            <person name="Medina N."/>
            <person name="Mansoor H."/>
            <person name="Pryor M."/>
            <person name="Duthoy S."/>
            <person name="Grondin S."/>
            <person name="Lacroix C."/>
            <person name="Monsempe C."/>
            <person name="Simon S."/>
            <person name="Harris B."/>
            <person name="Atkin R."/>
            <person name="Doggett J."/>
            <person name="Mayes R."/>
            <person name="Keating L."/>
            <person name="Wheeler P.R."/>
            <person name="Parkhill J."/>
            <person name="Barrell B.G."/>
            <person name="Cole S.T."/>
            <person name="Gordon S.V."/>
            <person name="Hewinson R.G."/>
        </authorList>
    </citation>
    <scope>NUCLEOTIDE SEQUENCE [LARGE SCALE GENOMIC DNA]</scope>
    <source>
        <strain>ATCC BAA-935 / AF2122/97</strain>
    </source>
</reference>
<reference key="2">
    <citation type="journal article" date="2017" name="Genome Announc.">
        <title>Updated reference genome sequence and annotation of Mycobacterium bovis AF2122/97.</title>
        <authorList>
            <person name="Malone K.M."/>
            <person name="Farrell D."/>
            <person name="Stuber T.P."/>
            <person name="Schubert O.T."/>
            <person name="Aebersold R."/>
            <person name="Robbe-Austerman S."/>
            <person name="Gordon S.V."/>
        </authorList>
    </citation>
    <scope>NUCLEOTIDE SEQUENCE [LARGE SCALE GENOMIC DNA]</scope>
    <scope>GENOME REANNOTATION</scope>
    <source>
        <strain>ATCC BAA-935 / AF2122/97</strain>
    </source>
</reference>
<gene>
    <name type="primary">ssb</name>
    <name type="ordered locus">BQ2027_MB0055</name>
</gene>
<accession>P0A611</accession>
<accession>A0A1R3XU70</accession>
<accession>P71711</accession>
<accession>X2BDW1</accession>
<protein>
    <recommendedName>
        <fullName evidence="1">Single-stranded DNA-binding protein</fullName>
        <shortName evidence="1">SSB</shortName>
    </recommendedName>
</protein>
<name>SSB_MYCBO</name>
<keyword id="KW-0238">DNA-binding</keyword>
<keyword id="KW-1185">Reference proteome</keyword>
<comment type="subunit">
    <text>Homotetramer.</text>
</comment>
<feature type="chain" id="PRO_0000096066" description="Single-stranded DNA-binding protein">
    <location>
        <begin position="1"/>
        <end position="164"/>
    </location>
</feature>
<feature type="domain" description="SSB" evidence="1">
    <location>
        <begin position="1"/>
        <end position="110"/>
    </location>
</feature>
<feature type="region of interest" description="Disordered" evidence="2">
    <location>
        <begin position="120"/>
        <end position="164"/>
    </location>
</feature>